<evidence type="ECO:0000255" key="1">
    <source>
        <dbReference type="HAMAP-Rule" id="MF_00097"/>
    </source>
</evidence>
<reference key="1">
    <citation type="journal article" date="2011" name="Stand. Genomic Sci.">
        <title>Complete genome sequence of the filamentous gliding predatory bacterium Herpetosiphon aurantiacus type strain (114-95(T)).</title>
        <authorList>
            <person name="Kiss H."/>
            <person name="Nett M."/>
            <person name="Domin N."/>
            <person name="Martin K."/>
            <person name="Maresca J.A."/>
            <person name="Copeland A."/>
            <person name="Lapidus A."/>
            <person name="Lucas S."/>
            <person name="Berry K.W."/>
            <person name="Glavina Del Rio T."/>
            <person name="Dalin E."/>
            <person name="Tice H."/>
            <person name="Pitluck S."/>
            <person name="Richardson P."/>
            <person name="Bruce D."/>
            <person name="Goodwin L."/>
            <person name="Han C."/>
            <person name="Detter J.C."/>
            <person name="Schmutz J."/>
            <person name="Brettin T."/>
            <person name="Land M."/>
            <person name="Hauser L."/>
            <person name="Kyrpides N.C."/>
            <person name="Ivanova N."/>
            <person name="Goeker M."/>
            <person name="Woyke T."/>
            <person name="Klenk H.P."/>
            <person name="Bryant D.A."/>
        </authorList>
    </citation>
    <scope>NUCLEOTIDE SEQUENCE [LARGE SCALE GENOMIC DNA]</scope>
    <source>
        <strain>ATCC 23779 / DSM 785 / 114-95</strain>
    </source>
</reference>
<protein>
    <recommendedName>
        <fullName evidence="1">Thiamine-phosphate synthase</fullName>
        <shortName evidence="1">TP synthase</shortName>
        <shortName evidence="1">TPS</shortName>
        <ecNumber evidence="1">2.5.1.3</ecNumber>
    </recommendedName>
    <alternativeName>
        <fullName evidence="1">Thiamine-phosphate pyrophosphorylase</fullName>
        <shortName evidence="1">TMP pyrophosphorylase</shortName>
        <shortName evidence="1">TMP-PPase</shortName>
    </alternativeName>
</protein>
<name>THIE_HERA2</name>
<sequence>MMQIDWRLYAVLDTATLGSRDPLAMTAALLAGGIGVLQLRAKNLSVRQTAQLAQAILPLTKIAQIPLIINDDLGLALAVGADGVHLGVDDLPLDLARASFKGLIGYSPEGVADAQRAEKLGVDYLGVGPFAATTTKLDAGAPLGQAGLRAIVEAVDCPVVAIGGIAQHNVAEVRACGVAGIVVVSALLNATNPTQACREFLAHYKE</sequence>
<gene>
    <name evidence="1" type="primary">thiE</name>
    <name type="ordered locus">Haur_2443</name>
</gene>
<feature type="chain" id="PRO_1000198079" description="Thiamine-phosphate synthase">
    <location>
        <begin position="1"/>
        <end position="206"/>
    </location>
</feature>
<feature type="binding site" evidence="1">
    <location>
        <begin position="38"/>
        <end position="42"/>
    </location>
    <ligand>
        <name>4-amino-2-methyl-5-(diphosphooxymethyl)pyrimidine</name>
        <dbReference type="ChEBI" id="CHEBI:57841"/>
    </ligand>
</feature>
<feature type="binding site" evidence="1">
    <location>
        <position position="70"/>
    </location>
    <ligand>
        <name>4-amino-2-methyl-5-(diphosphooxymethyl)pyrimidine</name>
        <dbReference type="ChEBI" id="CHEBI:57841"/>
    </ligand>
</feature>
<feature type="binding site" evidence="1">
    <location>
        <position position="71"/>
    </location>
    <ligand>
        <name>Mg(2+)</name>
        <dbReference type="ChEBI" id="CHEBI:18420"/>
    </ligand>
</feature>
<feature type="binding site" evidence="1">
    <location>
        <position position="90"/>
    </location>
    <ligand>
        <name>Mg(2+)</name>
        <dbReference type="ChEBI" id="CHEBI:18420"/>
    </ligand>
</feature>
<feature type="binding site" evidence="1">
    <location>
        <position position="107"/>
    </location>
    <ligand>
        <name>4-amino-2-methyl-5-(diphosphooxymethyl)pyrimidine</name>
        <dbReference type="ChEBI" id="CHEBI:57841"/>
    </ligand>
</feature>
<feature type="binding site" evidence="1">
    <location>
        <begin position="133"/>
        <end position="135"/>
    </location>
    <ligand>
        <name>2-[(2R,5Z)-2-carboxy-4-methylthiazol-5(2H)-ylidene]ethyl phosphate</name>
        <dbReference type="ChEBI" id="CHEBI:62899"/>
    </ligand>
</feature>
<feature type="binding site" evidence="1">
    <location>
        <position position="136"/>
    </location>
    <ligand>
        <name>4-amino-2-methyl-5-(diphosphooxymethyl)pyrimidine</name>
        <dbReference type="ChEBI" id="CHEBI:57841"/>
    </ligand>
</feature>
<feature type="binding site" evidence="1">
    <location>
        <position position="164"/>
    </location>
    <ligand>
        <name>2-[(2R,5Z)-2-carboxy-4-methylthiazol-5(2H)-ylidene]ethyl phosphate</name>
        <dbReference type="ChEBI" id="CHEBI:62899"/>
    </ligand>
</feature>
<feature type="binding site" evidence="1">
    <location>
        <begin position="184"/>
        <end position="185"/>
    </location>
    <ligand>
        <name>2-[(2R,5Z)-2-carboxy-4-methylthiazol-5(2H)-ylidene]ethyl phosphate</name>
        <dbReference type="ChEBI" id="CHEBI:62899"/>
    </ligand>
</feature>
<proteinExistence type="inferred from homology"/>
<organism>
    <name type="scientific">Herpetosiphon aurantiacus (strain ATCC 23779 / DSM 785 / 114-95)</name>
    <dbReference type="NCBI Taxonomy" id="316274"/>
    <lineage>
        <taxon>Bacteria</taxon>
        <taxon>Bacillati</taxon>
        <taxon>Chloroflexota</taxon>
        <taxon>Chloroflexia</taxon>
        <taxon>Herpetosiphonales</taxon>
        <taxon>Herpetosiphonaceae</taxon>
        <taxon>Herpetosiphon</taxon>
    </lineage>
</organism>
<comment type="function">
    <text evidence="1">Condenses 4-methyl-5-(beta-hydroxyethyl)thiazole monophosphate (THZ-P) and 2-methyl-4-amino-5-hydroxymethyl pyrimidine pyrophosphate (HMP-PP) to form thiamine monophosphate (TMP).</text>
</comment>
<comment type="catalytic activity">
    <reaction evidence="1">
        <text>2-[(2R,5Z)-2-carboxy-4-methylthiazol-5(2H)-ylidene]ethyl phosphate + 4-amino-2-methyl-5-(diphosphooxymethyl)pyrimidine + 2 H(+) = thiamine phosphate + CO2 + diphosphate</text>
        <dbReference type="Rhea" id="RHEA:47844"/>
        <dbReference type="ChEBI" id="CHEBI:15378"/>
        <dbReference type="ChEBI" id="CHEBI:16526"/>
        <dbReference type="ChEBI" id="CHEBI:33019"/>
        <dbReference type="ChEBI" id="CHEBI:37575"/>
        <dbReference type="ChEBI" id="CHEBI:57841"/>
        <dbReference type="ChEBI" id="CHEBI:62899"/>
        <dbReference type="EC" id="2.5.1.3"/>
    </reaction>
</comment>
<comment type="catalytic activity">
    <reaction evidence="1">
        <text>2-(2-carboxy-4-methylthiazol-5-yl)ethyl phosphate + 4-amino-2-methyl-5-(diphosphooxymethyl)pyrimidine + 2 H(+) = thiamine phosphate + CO2 + diphosphate</text>
        <dbReference type="Rhea" id="RHEA:47848"/>
        <dbReference type="ChEBI" id="CHEBI:15378"/>
        <dbReference type="ChEBI" id="CHEBI:16526"/>
        <dbReference type="ChEBI" id="CHEBI:33019"/>
        <dbReference type="ChEBI" id="CHEBI:37575"/>
        <dbReference type="ChEBI" id="CHEBI:57841"/>
        <dbReference type="ChEBI" id="CHEBI:62890"/>
        <dbReference type="EC" id="2.5.1.3"/>
    </reaction>
</comment>
<comment type="catalytic activity">
    <reaction evidence="1">
        <text>4-methyl-5-(2-phosphooxyethyl)-thiazole + 4-amino-2-methyl-5-(diphosphooxymethyl)pyrimidine + H(+) = thiamine phosphate + diphosphate</text>
        <dbReference type="Rhea" id="RHEA:22328"/>
        <dbReference type="ChEBI" id="CHEBI:15378"/>
        <dbReference type="ChEBI" id="CHEBI:33019"/>
        <dbReference type="ChEBI" id="CHEBI:37575"/>
        <dbReference type="ChEBI" id="CHEBI:57841"/>
        <dbReference type="ChEBI" id="CHEBI:58296"/>
        <dbReference type="EC" id="2.5.1.3"/>
    </reaction>
</comment>
<comment type="cofactor">
    <cofactor evidence="1">
        <name>Mg(2+)</name>
        <dbReference type="ChEBI" id="CHEBI:18420"/>
    </cofactor>
    <text evidence="1">Binds 1 Mg(2+) ion per subunit.</text>
</comment>
<comment type="pathway">
    <text evidence="1">Cofactor biosynthesis; thiamine diphosphate biosynthesis; thiamine phosphate from 4-amino-2-methyl-5-diphosphomethylpyrimidine and 4-methyl-5-(2-phosphoethyl)-thiazole: step 1/1.</text>
</comment>
<comment type="similarity">
    <text evidence="1">Belongs to the thiamine-phosphate synthase family.</text>
</comment>
<keyword id="KW-0460">Magnesium</keyword>
<keyword id="KW-0479">Metal-binding</keyword>
<keyword id="KW-0784">Thiamine biosynthesis</keyword>
<keyword id="KW-0808">Transferase</keyword>
<dbReference type="EC" id="2.5.1.3" evidence="1"/>
<dbReference type="EMBL" id="CP000875">
    <property type="protein sequence ID" value="ABX05083.1"/>
    <property type="molecule type" value="Genomic_DNA"/>
</dbReference>
<dbReference type="SMR" id="A9AZD9"/>
<dbReference type="FunCoup" id="A9AZD9">
    <property type="interactions" value="382"/>
</dbReference>
<dbReference type="STRING" id="316274.Haur_2443"/>
<dbReference type="KEGG" id="hau:Haur_2443"/>
<dbReference type="eggNOG" id="COG0352">
    <property type="taxonomic scope" value="Bacteria"/>
</dbReference>
<dbReference type="HOGENOM" id="CLU_018272_3_4_0"/>
<dbReference type="InParanoid" id="A9AZD9"/>
<dbReference type="UniPathway" id="UPA00060">
    <property type="reaction ID" value="UER00141"/>
</dbReference>
<dbReference type="Proteomes" id="UP000000787">
    <property type="component" value="Chromosome"/>
</dbReference>
<dbReference type="GO" id="GO:0005737">
    <property type="term" value="C:cytoplasm"/>
    <property type="evidence" value="ECO:0007669"/>
    <property type="project" value="TreeGrafter"/>
</dbReference>
<dbReference type="GO" id="GO:0000287">
    <property type="term" value="F:magnesium ion binding"/>
    <property type="evidence" value="ECO:0007669"/>
    <property type="project" value="UniProtKB-UniRule"/>
</dbReference>
<dbReference type="GO" id="GO:0004789">
    <property type="term" value="F:thiamine-phosphate diphosphorylase activity"/>
    <property type="evidence" value="ECO:0007669"/>
    <property type="project" value="UniProtKB-UniRule"/>
</dbReference>
<dbReference type="GO" id="GO:0009228">
    <property type="term" value="P:thiamine biosynthetic process"/>
    <property type="evidence" value="ECO:0007669"/>
    <property type="project" value="UniProtKB-KW"/>
</dbReference>
<dbReference type="GO" id="GO:0009229">
    <property type="term" value="P:thiamine diphosphate biosynthetic process"/>
    <property type="evidence" value="ECO:0007669"/>
    <property type="project" value="UniProtKB-UniRule"/>
</dbReference>
<dbReference type="CDD" id="cd00564">
    <property type="entry name" value="TMP_TenI"/>
    <property type="match status" value="1"/>
</dbReference>
<dbReference type="Gene3D" id="3.20.20.70">
    <property type="entry name" value="Aldolase class I"/>
    <property type="match status" value="1"/>
</dbReference>
<dbReference type="HAMAP" id="MF_00097">
    <property type="entry name" value="TMP_synthase"/>
    <property type="match status" value="1"/>
</dbReference>
<dbReference type="InterPro" id="IPR013785">
    <property type="entry name" value="Aldolase_TIM"/>
</dbReference>
<dbReference type="InterPro" id="IPR036206">
    <property type="entry name" value="ThiamineP_synth_sf"/>
</dbReference>
<dbReference type="InterPro" id="IPR022998">
    <property type="entry name" value="ThiamineP_synth_TenI"/>
</dbReference>
<dbReference type="InterPro" id="IPR034291">
    <property type="entry name" value="TMP_synthase"/>
</dbReference>
<dbReference type="NCBIfam" id="TIGR00693">
    <property type="entry name" value="thiE"/>
    <property type="match status" value="1"/>
</dbReference>
<dbReference type="PANTHER" id="PTHR20857">
    <property type="entry name" value="THIAMINE-PHOSPHATE PYROPHOSPHORYLASE"/>
    <property type="match status" value="1"/>
</dbReference>
<dbReference type="PANTHER" id="PTHR20857:SF15">
    <property type="entry name" value="THIAMINE-PHOSPHATE SYNTHASE"/>
    <property type="match status" value="1"/>
</dbReference>
<dbReference type="Pfam" id="PF02581">
    <property type="entry name" value="TMP-TENI"/>
    <property type="match status" value="1"/>
</dbReference>
<dbReference type="SUPFAM" id="SSF51391">
    <property type="entry name" value="Thiamin phosphate synthase"/>
    <property type="match status" value="1"/>
</dbReference>
<accession>A9AZD9</accession>